<comment type="function">
    <text evidence="1">Adapter protein required for efficient degradation of Spx by ClpXP under non-stress conditions. Interaction with Spx stabilizes Spx and exposes the C-terminus of Spx for recognition and proteolysis by ClpXP.</text>
</comment>
<comment type="subunit">
    <text evidence="1">Interacts with Spx.</text>
</comment>
<comment type="subcellular location">
    <subcellularLocation>
        <location evidence="1">Cytoplasm</location>
    </subcellularLocation>
</comment>
<comment type="similarity">
    <text evidence="1">Belongs to the SpxH family.</text>
</comment>
<sequence>MAGELRIMENKSREDINLSPVSKIEIYSFFDPFSSDCFKLSAILSKLRIEYNQYIRIRHILNPSLKVLTKCQAQSTSNFDNIALAYKAAELQGRVRVERFIHLMQNEIIPKRDIITESMICDCIQNAGIDLEVFKDDLQKSKLTESLKIDLHIAREMEIEQAPSLVFFSEDVHEEGLKVEGLYPYHIYTYIINELMGKPIEKNLPPKLETYIQQQQLVTMEELLTIYEWPEKLLNKELKKLAIQQKIEKLKYPDGDFWKSKMPKIKSK</sequence>
<keyword id="KW-0963">Cytoplasm</keyword>
<protein>
    <recommendedName>
        <fullName evidence="1">ClpXP adapter protein SpxH</fullName>
    </recommendedName>
</protein>
<proteinExistence type="inferred from homology"/>
<gene>
    <name evidence="1" type="primary">spxH</name>
    <name type="ordered locus">SACOL1006</name>
</gene>
<reference key="1">
    <citation type="journal article" date="2005" name="J. Bacteriol.">
        <title>Insights on evolution of virulence and resistance from the complete genome analysis of an early methicillin-resistant Staphylococcus aureus strain and a biofilm-producing methicillin-resistant Staphylococcus epidermidis strain.</title>
        <authorList>
            <person name="Gill S.R."/>
            <person name="Fouts D.E."/>
            <person name="Archer G.L."/>
            <person name="Mongodin E.F."/>
            <person name="DeBoy R.T."/>
            <person name="Ravel J."/>
            <person name="Paulsen I.T."/>
            <person name="Kolonay J.F."/>
            <person name="Brinkac L.M."/>
            <person name="Beanan M.J."/>
            <person name="Dodson R.J."/>
            <person name="Daugherty S.C."/>
            <person name="Madupu R."/>
            <person name="Angiuoli S.V."/>
            <person name="Durkin A.S."/>
            <person name="Haft D.H."/>
            <person name="Vamathevan J.J."/>
            <person name="Khouri H."/>
            <person name="Utterback T.R."/>
            <person name="Lee C."/>
            <person name="Dimitrov G."/>
            <person name="Jiang L."/>
            <person name="Qin H."/>
            <person name="Weidman J."/>
            <person name="Tran K."/>
            <person name="Kang K.H."/>
            <person name="Hance I.R."/>
            <person name="Nelson K.E."/>
            <person name="Fraser C.M."/>
        </authorList>
    </citation>
    <scope>NUCLEOTIDE SEQUENCE [LARGE SCALE GENOMIC DNA]</scope>
    <source>
        <strain>COL</strain>
    </source>
</reference>
<feature type="chain" id="PRO_0000278691" description="ClpXP adapter protein SpxH">
    <location>
        <begin position="1"/>
        <end position="268"/>
    </location>
</feature>
<organism>
    <name type="scientific">Staphylococcus aureus (strain COL)</name>
    <dbReference type="NCBI Taxonomy" id="93062"/>
    <lineage>
        <taxon>Bacteria</taxon>
        <taxon>Bacillati</taxon>
        <taxon>Bacillota</taxon>
        <taxon>Bacilli</taxon>
        <taxon>Bacillales</taxon>
        <taxon>Staphylococcaceae</taxon>
        <taxon>Staphylococcus</taxon>
    </lineage>
</organism>
<accession>Q5HH83</accession>
<evidence type="ECO:0000255" key="1">
    <source>
        <dbReference type="HAMAP-Rule" id="MF_02245"/>
    </source>
</evidence>
<name>SPXH_STAAC</name>
<dbReference type="EMBL" id="CP000046">
    <property type="protein sequence ID" value="AAW36474.1"/>
    <property type="molecule type" value="Genomic_DNA"/>
</dbReference>
<dbReference type="RefSeq" id="WP_000896699.1">
    <property type="nucleotide sequence ID" value="NC_002951.2"/>
</dbReference>
<dbReference type="SMR" id="Q5HH83"/>
<dbReference type="KEGG" id="sac:SACOL1006"/>
<dbReference type="HOGENOM" id="CLU_069785_0_0_9"/>
<dbReference type="Proteomes" id="UP000000530">
    <property type="component" value="Chromosome"/>
</dbReference>
<dbReference type="GO" id="GO:0005737">
    <property type="term" value="C:cytoplasm"/>
    <property type="evidence" value="ECO:0007669"/>
    <property type="project" value="UniProtKB-SubCell"/>
</dbReference>
<dbReference type="Gene3D" id="3.40.30.10">
    <property type="entry name" value="Glutaredoxin"/>
    <property type="match status" value="1"/>
</dbReference>
<dbReference type="HAMAP" id="MF_02245">
    <property type="entry name" value="Adapter_SpxH"/>
    <property type="match status" value="1"/>
</dbReference>
<dbReference type="InterPro" id="IPR046404">
    <property type="entry name" value="Adapter_SpxH"/>
</dbReference>
<dbReference type="InterPro" id="IPR036249">
    <property type="entry name" value="Thioredoxin-like_sf"/>
</dbReference>
<dbReference type="PANTHER" id="PTHR13887:SF47">
    <property type="entry name" value="CLPXP ADAPTER PROTEIN SPXH"/>
    <property type="match status" value="1"/>
</dbReference>
<dbReference type="PANTHER" id="PTHR13887">
    <property type="entry name" value="GLUTATHIONE S-TRANSFERASE KAPPA"/>
    <property type="match status" value="1"/>
</dbReference>
<dbReference type="Pfam" id="PF13743">
    <property type="entry name" value="Thioredoxin_5"/>
    <property type="match status" value="1"/>
</dbReference>
<dbReference type="SUPFAM" id="SSF52833">
    <property type="entry name" value="Thioredoxin-like"/>
    <property type="match status" value="1"/>
</dbReference>